<feature type="chain" id="PRO_0000122552" description="Aminomethyltransferase">
    <location>
        <begin position="1"/>
        <end position="362"/>
    </location>
</feature>
<sequence>MTAPKRTPLFDAHIAAGAKMVDFAGWEMPIHYGSQLKEHEIVRSDAGMFDVSHMTVIDITGADAKAWLQKLIANDVAKLGFEGKALYSGMLTPEGTVVDDLIVYLTAYGYRMVVNAGTTEKDLAWMESQKAGFDVALKVRRDLAMLAVQGPKAIQKVCSIKPELAEAIRALKVFQGLPQGEWFYARTGYTGEDGLEIMVPADQAISFFHQLQAAGVSPIGLGARDTLRLEAGMNLYGHDMDETVSPLEAGMGWTIAWEPAERKFNGREALEAQKAAGVKMKQVGLVLEGRGVLREGLKVVVESVGEGVITSGTFSPTLKHSIAIARVPAATGAAAQVDLRGTLTDVRVVKMPFVRNGKKVFE</sequence>
<keyword id="KW-0032">Aminotransferase</keyword>
<keyword id="KW-1185">Reference proteome</keyword>
<keyword id="KW-0808">Transferase</keyword>
<comment type="function">
    <text evidence="1">The glycine cleavage system catalyzes the degradation of glycine.</text>
</comment>
<comment type="catalytic activity">
    <reaction evidence="1">
        <text>N(6)-[(R)-S(8)-aminomethyldihydrolipoyl]-L-lysyl-[protein] + (6S)-5,6,7,8-tetrahydrofolate = N(6)-[(R)-dihydrolipoyl]-L-lysyl-[protein] + (6R)-5,10-methylene-5,6,7,8-tetrahydrofolate + NH4(+)</text>
        <dbReference type="Rhea" id="RHEA:16945"/>
        <dbReference type="Rhea" id="RHEA-COMP:10475"/>
        <dbReference type="Rhea" id="RHEA-COMP:10492"/>
        <dbReference type="ChEBI" id="CHEBI:15636"/>
        <dbReference type="ChEBI" id="CHEBI:28938"/>
        <dbReference type="ChEBI" id="CHEBI:57453"/>
        <dbReference type="ChEBI" id="CHEBI:83100"/>
        <dbReference type="ChEBI" id="CHEBI:83143"/>
        <dbReference type="EC" id="2.1.2.10"/>
    </reaction>
</comment>
<comment type="subunit">
    <text evidence="1">The glycine cleavage system is composed of four proteins: P, T, L and H.</text>
</comment>
<comment type="similarity">
    <text evidence="1">Belongs to the GcvT family.</text>
</comment>
<accession>Q7NSJ3</accession>
<proteinExistence type="inferred from homology"/>
<organism>
    <name type="scientific">Chromobacterium violaceum (strain ATCC 12472 / DSM 30191 / JCM 1249 / CCUG 213 / NBRC 12614 / NCIMB 9131 / NCTC 9757 / MK)</name>
    <dbReference type="NCBI Taxonomy" id="243365"/>
    <lineage>
        <taxon>Bacteria</taxon>
        <taxon>Pseudomonadati</taxon>
        <taxon>Pseudomonadota</taxon>
        <taxon>Betaproteobacteria</taxon>
        <taxon>Neisseriales</taxon>
        <taxon>Chromobacteriaceae</taxon>
        <taxon>Chromobacterium</taxon>
    </lineage>
</organism>
<dbReference type="EC" id="2.1.2.10" evidence="1"/>
<dbReference type="EMBL" id="AE016825">
    <property type="protein sequence ID" value="AAQ61094.1"/>
    <property type="molecule type" value="Genomic_DNA"/>
</dbReference>
<dbReference type="RefSeq" id="WP_011136978.1">
    <property type="nucleotide sequence ID" value="NC_005085.1"/>
</dbReference>
<dbReference type="SMR" id="Q7NSJ3"/>
<dbReference type="STRING" id="243365.CV_3431"/>
<dbReference type="KEGG" id="cvi:CV_3431"/>
<dbReference type="eggNOG" id="COG0404">
    <property type="taxonomic scope" value="Bacteria"/>
</dbReference>
<dbReference type="HOGENOM" id="CLU_007884_10_2_4"/>
<dbReference type="OrthoDB" id="9774591at2"/>
<dbReference type="Proteomes" id="UP000001424">
    <property type="component" value="Chromosome"/>
</dbReference>
<dbReference type="GO" id="GO:0005829">
    <property type="term" value="C:cytosol"/>
    <property type="evidence" value="ECO:0007669"/>
    <property type="project" value="TreeGrafter"/>
</dbReference>
<dbReference type="GO" id="GO:0005960">
    <property type="term" value="C:glycine cleavage complex"/>
    <property type="evidence" value="ECO:0007669"/>
    <property type="project" value="InterPro"/>
</dbReference>
<dbReference type="GO" id="GO:0004047">
    <property type="term" value="F:aminomethyltransferase activity"/>
    <property type="evidence" value="ECO:0007669"/>
    <property type="project" value="UniProtKB-UniRule"/>
</dbReference>
<dbReference type="GO" id="GO:0008483">
    <property type="term" value="F:transaminase activity"/>
    <property type="evidence" value="ECO:0007669"/>
    <property type="project" value="UniProtKB-KW"/>
</dbReference>
<dbReference type="GO" id="GO:0019464">
    <property type="term" value="P:glycine decarboxylation via glycine cleavage system"/>
    <property type="evidence" value="ECO:0007669"/>
    <property type="project" value="UniProtKB-UniRule"/>
</dbReference>
<dbReference type="FunFam" id="3.30.70.1400:FF:000001">
    <property type="entry name" value="Aminomethyltransferase"/>
    <property type="match status" value="1"/>
</dbReference>
<dbReference type="FunFam" id="4.10.1250.10:FF:000001">
    <property type="entry name" value="Aminomethyltransferase"/>
    <property type="match status" value="1"/>
</dbReference>
<dbReference type="Gene3D" id="2.40.30.110">
    <property type="entry name" value="Aminomethyltransferase beta-barrel domains"/>
    <property type="match status" value="1"/>
</dbReference>
<dbReference type="Gene3D" id="3.30.70.1400">
    <property type="entry name" value="Aminomethyltransferase beta-barrel domains"/>
    <property type="match status" value="1"/>
</dbReference>
<dbReference type="Gene3D" id="4.10.1250.10">
    <property type="entry name" value="Aminomethyltransferase fragment"/>
    <property type="match status" value="1"/>
</dbReference>
<dbReference type="Gene3D" id="3.30.1360.120">
    <property type="entry name" value="Probable tRNA modification gtpase trme, domain 1"/>
    <property type="match status" value="1"/>
</dbReference>
<dbReference type="HAMAP" id="MF_00259">
    <property type="entry name" value="GcvT"/>
    <property type="match status" value="1"/>
</dbReference>
<dbReference type="InterPro" id="IPR006223">
    <property type="entry name" value="GCS_T"/>
</dbReference>
<dbReference type="InterPro" id="IPR022903">
    <property type="entry name" value="GCS_T_bac"/>
</dbReference>
<dbReference type="InterPro" id="IPR013977">
    <property type="entry name" value="GCST_C"/>
</dbReference>
<dbReference type="InterPro" id="IPR006222">
    <property type="entry name" value="GCV_T_N"/>
</dbReference>
<dbReference type="InterPro" id="IPR028896">
    <property type="entry name" value="GcvT/YgfZ/DmdA"/>
</dbReference>
<dbReference type="InterPro" id="IPR029043">
    <property type="entry name" value="GcvT/YgfZ_C"/>
</dbReference>
<dbReference type="InterPro" id="IPR027266">
    <property type="entry name" value="TrmE/GcvT_dom1"/>
</dbReference>
<dbReference type="NCBIfam" id="TIGR00528">
    <property type="entry name" value="gcvT"/>
    <property type="match status" value="1"/>
</dbReference>
<dbReference type="NCBIfam" id="NF001567">
    <property type="entry name" value="PRK00389.1"/>
    <property type="match status" value="1"/>
</dbReference>
<dbReference type="PANTHER" id="PTHR43757">
    <property type="entry name" value="AMINOMETHYLTRANSFERASE"/>
    <property type="match status" value="1"/>
</dbReference>
<dbReference type="PANTHER" id="PTHR43757:SF2">
    <property type="entry name" value="AMINOMETHYLTRANSFERASE, MITOCHONDRIAL"/>
    <property type="match status" value="1"/>
</dbReference>
<dbReference type="Pfam" id="PF01571">
    <property type="entry name" value="GCV_T"/>
    <property type="match status" value="1"/>
</dbReference>
<dbReference type="Pfam" id="PF08669">
    <property type="entry name" value="GCV_T_C"/>
    <property type="match status" value="1"/>
</dbReference>
<dbReference type="PIRSF" id="PIRSF006487">
    <property type="entry name" value="GcvT"/>
    <property type="match status" value="1"/>
</dbReference>
<dbReference type="SUPFAM" id="SSF101790">
    <property type="entry name" value="Aminomethyltransferase beta-barrel domain"/>
    <property type="match status" value="1"/>
</dbReference>
<dbReference type="SUPFAM" id="SSF103025">
    <property type="entry name" value="Folate-binding domain"/>
    <property type="match status" value="1"/>
</dbReference>
<gene>
    <name evidence="1" type="primary">gcvT</name>
    <name type="ordered locus">CV_3431</name>
</gene>
<protein>
    <recommendedName>
        <fullName evidence="1">Aminomethyltransferase</fullName>
        <ecNumber evidence="1">2.1.2.10</ecNumber>
    </recommendedName>
    <alternativeName>
        <fullName evidence="1">Glycine cleavage system T protein</fullName>
    </alternativeName>
</protein>
<name>GCST_CHRVO</name>
<evidence type="ECO:0000255" key="1">
    <source>
        <dbReference type="HAMAP-Rule" id="MF_00259"/>
    </source>
</evidence>
<reference key="1">
    <citation type="journal article" date="2003" name="Proc. Natl. Acad. Sci. U.S.A.">
        <title>The complete genome sequence of Chromobacterium violaceum reveals remarkable and exploitable bacterial adaptability.</title>
        <authorList>
            <person name="Vasconcelos A.T.R."/>
            <person name="de Almeida D.F."/>
            <person name="Hungria M."/>
            <person name="Guimaraes C.T."/>
            <person name="Antonio R.V."/>
            <person name="Almeida F.C."/>
            <person name="de Almeida L.G.P."/>
            <person name="de Almeida R."/>
            <person name="Alves-Gomes J.A."/>
            <person name="Andrade E.M."/>
            <person name="Araripe J."/>
            <person name="de Araujo M.F.F."/>
            <person name="Astolfi-Filho S."/>
            <person name="Azevedo V."/>
            <person name="Baptista A.J."/>
            <person name="Bataus L.A.M."/>
            <person name="Batista J.S."/>
            <person name="Belo A."/>
            <person name="van den Berg C."/>
            <person name="Bogo M."/>
            <person name="Bonatto S."/>
            <person name="Bordignon J."/>
            <person name="Brigido M.M."/>
            <person name="Brito C.A."/>
            <person name="Brocchi M."/>
            <person name="Burity H.A."/>
            <person name="Camargo A.A."/>
            <person name="Cardoso D.D.P."/>
            <person name="Carneiro N.P."/>
            <person name="Carraro D.M."/>
            <person name="Carvalho C.M.B."/>
            <person name="Cascardo J.C.M."/>
            <person name="Cavada B.S."/>
            <person name="Chueire L.M.O."/>
            <person name="Creczynski-Pasa T.B."/>
            <person name="Cunha-Junior N.C."/>
            <person name="Fagundes N."/>
            <person name="Falcao C.L."/>
            <person name="Fantinatti F."/>
            <person name="Farias I.P."/>
            <person name="Felipe M.S.S."/>
            <person name="Ferrari L.P."/>
            <person name="Ferro J.A."/>
            <person name="Ferro M.I.T."/>
            <person name="Franco G.R."/>
            <person name="Freitas N.S.A."/>
            <person name="Furlan L.R."/>
            <person name="Gazzinelli R.T."/>
            <person name="Gomes E.A."/>
            <person name="Goncalves P.R."/>
            <person name="Grangeiro T.B."/>
            <person name="Grattapaglia D."/>
            <person name="Grisard E.C."/>
            <person name="Hanna E.S."/>
            <person name="Jardim S.N."/>
            <person name="Laurino J."/>
            <person name="Leoi L.C.T."/>
            <person name="Lima L.F.A."/>
            <person name="Loureiro M.F."/>
            <person name="Lyra M.C.C.P."/>
            <person name="Madeira H.M.F."/>
            <person name="Manfio G.P."/>
            <person name="Maranhao A.Q."/>
            <person name="Martins W.S."/>
            <person name="di Mauro S.M.Z."/>
            <person name="de Medeiros S.R.B."/>
            <person name="Meissner R.V."/>
            <person name="Moreira M.A.M."/>
            <person name="Nascimento F.F."/>
            <person name="Nicolas M.F."/>
            <person name="Oliveira J.G."/>
            <person name="Oliveira S.C."/>
            <person name="Paixao R.F.C."/>
            <person name="Parente J.A."/>
            <person name="Pedrosa F.O."/>
            <person name="Pena S.D.J."/>
            <person name="Pereira J.O."/>
            <person name="Pereira M."/>
            <person name="Pinto L.S.R.C."/>
            <person name="Pinto L.S."/>
            <person name="Porto J.I.R."/>
            <person name="Potrich D.P."/>
            <person name="Ramalho-Neto C.E."/>
            <person name="Reis A.M.M."/>
            <person name="Rigo L.U."/>
            <person name="Rondinelli E."/>
            <person name="Santos E.B.P."/>
            <person name="Santos F.R."/>
            <person name="Schneider M.P.C."/>
            <person name="Seuanez H.N."/>
            <person name="Silva A.M.R."/>
            <person name="da Silva A.L.C."/>
            <person name="Silva D.W."/>
            <person name="Silva R."/>
            <person name="Simoes I.C."/>
            <person name="Simon D."/>
            <person name="Soares C.M.A."/>
            <person name="Soares R.B.A."/>
            <person name="Souza E.M."/>
            <person name="Souza K.R.L."/>
            <person name="Souza R.C."/>
            <person name="Steffens M.B.R."/>
            <person name="Steindel M."/>
            <person name="Teixeira S.R."/>
            <person name="Urmenyi T."/>
            <person name="Vettore A."/>
            <person name="Wassem R."/>
            <person name="Zaha A."/>
            <person name="Simpson A.J.G."/>
        </authorList>
    </citation>
    <scope>NUCLEOTIDE SEQUENCE [LARGE SCALE GENOMIC DNA]</scope>
    <source>
        <strain>ATCC 12472 / DSM 30191 / JCM 1249 / CCUG 213 / NBRC 12614 / NCIMB 9131 / NCTC 9757 / MK</strain>
    </source>
</reference>